<feature type="chain" id="PRO_0000453924" description="Transmembrane channel-like protein">
    <location>
        <begin position="1"/>
        <end position="2036"/>
    </location>
</feature>
<feature type="topological domain" description="Cytoplasmic" evidence="9">
    <location>
        <begin position="1"/>
        <end position="353"/>
    </location>
</feature>
<feature type="transmembrane region" description="Helical" evidence="1">
    <location>
        <begin position="354"/>
        <end position="374"/>
    </location>
</feature>
<feature type="topological domain" description="Extracellular" evidence="9">
    <location>
        <begin position="375"/>
        <end position="395"/>
    </location>
</feature>
<feature type="transmembrane region" description="Helical" evidence="1">
    <location>
        <begin position="396"/>
        <end position="418"/>
    </location>
</feature>
<feature type="topological domain" description="Cytoplasmic" evidence="9">
    <location>
        <begin position="419"/>
        <end position="432"/>
    </location>
</feature>
<feature type="transmembrane region" description="Helical" evidence="1">
    <location>
        <begin position="433"/>
        <end position="453"/>
    </location>
</feature>
<feature type="topological domain" description="Extracellular" evidence="9">
    <location>
        <begin position="454"/>
        <end position="526"/>
    </location>
</feature>
<feature type="transmembrane region" description="Helical" evidence="1">
    <location>
        <begin position="527"/>
        <end position="547"/>
    </location>
</feature>
<feature type="topological domain" description="Cytoplasmic" evidence="9">
    <location>
        <begin position="548"/>
        <end position="567"/>
    </location>
</feature>
<feature type="transmembrane region" description="Helical" evidence="1">
    <location>
        <begin position="568"/>
        <end position="588"/>
    </location>
</feature>
<feature type="topological domain" description="Extracellular" evidence="9">
    <location>
        <begin position="589"/>
        <end position="599"/>
    </location>
</feature>
<feature type="transmembrane region" description="Helical" evidence="1">
    <location>
        <begin position="600"/>
        <end position="620"/>
    </location>
</feature>
<feature type="topological domain" description="Cytoplasmic" evidence="9">
    <location>
        <begin position="621"/>
        <end position="1308"/>
    </location>
</feature>
<feature type="transmembrane region" description="Helical" evidence="1">
    <location>
        <begin position="1309"/>
        <end position="1329"/>
    </location>
</feature>
<feature type="topological domain" description="Extracellular" evidence="9">
    <location>
        <begin position="1330"/>
        <end position="1358"/>
    </location>
</feature>
<feature type="transmembrane region" description="Helical" evidence="1">
    <location>
        <begin position="1359"/>
        <end position="1379"/>
    </location>
</feature>
<feature type="topological domain" description="Cytoplasmic" evidence="9">
    <location>
        <begin position="1380"/>
        <end position="1423"/>
    </location>
</feature>
<feature type="transmembrane region" description="Helical" evidence="1">
    <location>
        <begin position="1424"/>
        <end position="1444"/>
    </location>
</feature>
<feature type="topological domain" description="Extracellular" evidence="9">
    <location>
        <begin position="1445"/>
        <end position="2036"/>
    </location>
</feature>
<feature type="region of interest" description="Disordered" evidence="2">
    <location>
        <begin position="1"/>
        <end position="178"/>
    </location>
</feature>
<feature type="region of interest" description="Disordered" evidence="2">
    <location>
        <begin position="194"/>
        <end position="243"/>
    </location>
</feature>
<feature type="region of interest" description="Disordered" evidence="2">
    <location>
        <begin position="789"/>
        <end position="839"/>
    </location>
</feature>
<feature type="region of interest" description="Disordered" evidence="2">
    <location>
        <begin position="860"/>
        <end position="967"/>
    </location>
</feature>
<feature type="region of interest" description="Disordered" evidence="2">
    <location>
        <begin position="996"/>
        <end position="1027"/>
    </location>
</feature>
<feature type="region of interest" description="Disordered" evidence="2">
    <location>
        <begin position="1066"/>
        <end position="1143"/>
    </location>
</feature>
<feature type="region of interest" description="Disordered" evidence="2">
    <location>
        <begin position="1186"/>
        <end position="1205"/>
    </location>
</feature>
<feature type="region of interest" description="Disordered" evidence="2">
    <location>
        <begin position="1527"/>
        <end position="1572"/>
    </location>
</feature>
<feature type="region of interest" description="Disordered" evidence="2">
    <location>
        <begin position="1592"/>
        <end position="1841"/>
    </location>
</feature>
<feature type="region of interest" description="Disordered" evidence="2">
    <location>
        <begin position="1859"/>
        <end position="1990"/>
    </location>
</feature>
<feature type="compositionally biased region" description="Low complexity" evidence="2">
    <location>
        <begin position="58"/>
        <end position="73"/>
    </location>
</feature>
<feature type="compositionally biased region" description="Polar residues" evidence="2">
    <location>
        <begin position="74"/>
        <end position="90"/>
    </location>
</feature>
<feature type="compositionally biased region" description="Basic and acidic residues" evidence="2">
    <location>
        <begin position="125"/>
        <end position="134"/>
    </location>
</feature>
<feature type="compositionally biased region" description="Acidic residues" evidence="2">
    <location>
        <begin position="166"/>
        <end position="178"/>
    </location>
</feature>
<feature type="compositionally biased region" description="Basic residues" evidence="2">
    <location>
        <begin position="198"/>
        <end position="208"/>
    </location>
</feature>
<feature type="compositionally biased region" description="Basic and acidic residues" evidence="2">
    <location>
        <begin position="216"/>
        <end position="225"/>
    </location>
</feature>
<feature type="compositionally biased region" description="Polar residues" evidence="2">
    <location>
        <begin position="227"/>
        <end position="243"/>
    </location>
</feature>
<feature type="compositionally biased region" description="Polar residues" evidence="2">
    <location>
        <begin position="870"/>
        <end position="885"/>
    </location>
</feature>
<feature type="compositionally biased region" description="Low complexity" evidence="2">
    <location>
        <begin position="886"/>
        <end position="906"/>
    </location>
</feature>
<feature type="compositionally biased region" description="Polar residues" evidence="2">
    <location>
        <begin position="933"/>
        <end position="952"/>
    </location>
</feature>
<feature type="compositionally biased region" description="Acidic residues" evidence="2">
    <location>
        <begin position="953"/>
        <end position="967"/>
    </location>
</feature>
<feature type="compositionally biased region" description="Low complexity" evidence="2">
    <location>
        <begin position="1069"/>
        <end position="1083"/>
    </location>
</feature>
<feature type="compositionally biased region" description="Low complexity" evidence="2">
    <location>
        <begin position="1091"/>
        <end position="1100"/>
    </location>
</feature>
<feature type="compositionally biased region" description="Low complexity" evidence="2">
    <location>
        <begin position="1107"/>
        <end position="1130"/>
    </location>
</feature>
<feature type="compositionally biased region" description="Basic and acidic residues" evidence="2">
    <location>
        <begin position="1538"/>
        <end position="1566"/>
    </location>
</feature>
<feature type="compositionally biased region" description="Basic and acidic residues" evidence="2">
    <location>
        <begin position="1614"/>
        <end position="1640"/>
    </location>
</feature>
<feature type="compositionally biased region" description="Basic and acidic residues" evidence="2">
    <location>
        <begin position="1658"/>
        <end position="1668"/>
    </location>
</feature>
<feature type="compositionally biased region" description="Basic and acidic residues" evidence="2">
    <location>
        <begin position="1727"/>
        <end position="1743"/>
    </location>
</feature>
<feature type="compositionally biased region" description="Basic and acidic residues" evidence="2">
    <location>
        <begin position="1777"/>
        <end position="1793"/>
    </location>
</feature>
<feature type="compositionally biased region" description="Polar residues" evidence="2">
    <location>
        <begin position="1806"/>
        <end position="1838"/>
    </location>
</feature>
<feature type="compositionally biased region" description="Low complexity" evidence="2">
    <location>
        <begin position="1890"/>
        <end position="1899"/>
    </location>
</feature>
<feature type="compositionally biased region" description="Pro residues" evidence="2">
    <location>
        <begin position="1903"/>
        <end position="1914"/>
    </location>
</feature>
<feature type="compositionally biased region" description="Polar residues" evidence="2">
    <location>
        <begin position="1976"/>
        <end position="1990"/>
    </location>
</feature>
<feature type="splice variant" id="VSP_061215" description="In isoform D." evidence="9">
    <location>
        <begin position="1"/>
        <end position="104"/>
    </location>
</feature>
<keyword id="KW-0025">Alternative splicing</keyword>
<keyword id="KW-1003">Cell membrane</keyword>
<keyword id="KW-0966">Cell projection</keyword>
<keyword id="KW-0407">Ion channel</keyword>
<keyword id="KW-0406">Ion transport</keyword>
<keyword id="KW-0472">Membrane</keyword>
<keyword id="KW-1185">Reference proteome</keyword>
<keyword id="KW-0812">Transmembrane</keyword>
<keyword id="KW-1133">Transmembrane helix</keyword>
<keyword id="KW-0813">Transport</keyword>
<name>TMC_DROME</name>
<protein>
    <recommendedName>
        <fullName evidence="8">Transmembrane channel-like protein</fullName>
    </recommendedName>
</protein>
<sequence>MQNDEEPAAAAGTSGLSNGESLRSPPAPAPRRPKPGILRLDIGKPRRSSGGSVDFRCVGSSSSNGNTSNVATGANSENNSGVTSPHQLSVTWAPPCDLDRGGWQMQSSADAKREFYKGQRGRRAASQEDHRSYELNDFPLQNQSSDAESCHQEPHFAHQRSPGIGFDEDGGGGDIDDEESYTISVSAIMQRRASVRGYRGKRGSRSSRRASSPMDHVLDSVERRRSSVYTTSSEEGTNQESTQEQIFENIRLHKEVIQSVKLQPWPIRKKLKLVRQAKTYVARHEGALQERFAMSRSTRDLWARFKILMAARWRHWKRETASFLTVLIPWELRIKEIESHFGSGVASYFTFLRWLMWVNIMIAIPLVAFVIGPEYFATKHGETDPRKRMSDPEARVAGNLFTFWEFEGYLKYSPMFYGYYSSTSGISTSGYKLPLAYFLTAVLVYIYSFVATLRKMAENSRNSKLSSKDDECVFSWKLFTGWDFMIGHAETAHNRIASVVVGFKEALLEEAEKKKDNRNWRVILQRILVNILVMGLLGLSGATVVLLVNHSEDLAKHDNWLSRNAVNVTMTLLSFFLPMIFEALGLFENWHPRQQLRLQLARIMILNMLNLYSLMFSFIYKINSKEKPLQMLKLENETNTMELKNLLSSIEALRAMTPTTSLYGESTSDGLFDDSTSTATWGEDGGGLFSTTAAAALISTTVQRLKCYNMTVKCSKLRRNIISGKHLATTLMVLNLTTPAMVPPTLPTTLPTTFPTTLPTTLPTTLPTALPTTLPTTLPTTLPSTLATTTATTSSIWSTTEETSPTTTTTSPWTTLPPSTTTTEATTTTERATTTTEATSTTTLKITTAEINSTLSDTTKPLGKSIDTEIPNSTTNSATLSTIPATLNTTNLPLNSTTKLTTTTSTEKPQGEDNFIYTTGEDEGSYDYGSDSTSDAPDNNSYSDITDYSSEPSEIEDFDEQESTDQADDPLAKVLEQLDENETKGRRKRALAESPFFTSKYSRRHRNESAVSAGQPRETTESVNATPSRWPFNWASFRQTTPRTTTTRRVPSGILTKEEWERLRRLRGRITTTTSTSTTSTTTRRPRWRYRTTTTELTSTTEEESSTTESSTDSSSPGSTTNAFDSSSSTTEEDEYTTTEGSENRPYYVGYVDISEMGSTIYYDGDSEFLEECVITICPKGDDFFGSTTESPDSTTQSSDSKQLTTVKLTPLERKQKRLKEVQLAIKQIQTNLTTMCWETSLGQELSKVIVFDGLMSIVAPLCIDFLRALFVRYVNQNWCWDMEKTFPQYGDFKIAENILTLINNQGQVWMGIFFSPGLVLINLVKLMIMMYFRSWIVLTCNVPHEVVFKASKSNNFYLSLLLTMLFLCVLPVGYAIVWLRPSWHCGPFSEYNRIAEFITNTTRNALPKQLHEPLDYLTSSSTVIPLLLLLILIIYYLVSLTGALREANQDLRTQLQKEREEERKKIFKVPEVKQAEPTATTLTNRWRKVLEASSPVTPTQPPDFDTEEYKNQARKELISRIMKKALRKGSATSDEDSFVRRDDDDTDTEHQDSLPHDEEAKDKRFGLSRLQQIRRTRKPSLVDIVQIAKQERARAGSIVAGTSSSGTGNFPIKETHPKSRFKVEKHERKDRGSMKDKKDTRHRQSPQQQQQPPPYESPKDNEHDPDTNSRIVSASLLRRHKEQAEGEEPPTTPDAPQTPNSPVEPVEQALEESTPETPTLAKSKFHIVDEKKPPPHEVEDKPLPTPKESGSGGGSLGKFKFRKHKFKSNNVAAVKPEPEVFKFDERSVERSSDVPATHAAEYLNNEPSGTEEQDRSLPSPTPSQGQGHHQRQLSVLSRQGRKKIGNLLALVREAVNLKKDDVEQAGSDESPGPTTPTYLAYTPPPPPSVLSSVSSSTALEMPPTPEPESPTPSAPLHFGSSTSSRAPSKPPKPPMVPASATAPTATMDDLEELDTAGPITFPRRSDSHRRRTMRQDSQSSIWSDNIPTITISTTGSDECIVDAAAPQNGLPDPRSASPEPTVNIIRIDIENEHEK</sequence>
<proteinExistence type="evidence at protein level"/>
<gene>
    <name evidence="8 10" type="primary">Tmc</name>
    <name evidence="10" type="ORF">CG46121</name>
</gene>
<reference evidence="11" key="1">
    <citation type="journal article" date="2000" name="Science">
        <title>The genome sequence of Drosophila melanogaster.</title>
        <authorList>
            <person name="Adams M.D."/>
            <person name="Celniker S.E."/>
            <person name="Holt R.A."/>
            <person name="Evans C.A."/>
            <person name="Gocayne J.D."/>
            <person name="Amanatides P.G."/>
            <person name="Scherer S.E."/>
            <person name="Li P.W."/>
            <person name="Hoskins R.A."/>
            <person name="Galle R.F."/>
            <person name="George R.A."/>
            <person name="Lewis S.E."/>
            <person name="Richards S."/>
            <person name="Ashburner M."/>
            <person name="Henderson S.N."/>
            <person name="Sutton G.G."/>
            <person name="Wortman J.R."/>
            <person name="Yandell M.D."/>
            <person name="Zhang Q."/>
            <person name="Chen L.X."/>
            <person name="Brandon R.C."/>
            <person name="Rogers Y.-H.C."/>
            <person name="Blazej R.G."/>
            <person name="Champe M."/>
            <person name="Pfeiffer B.D."/>
            <person name="Wan K.H."/>
            <person name="Doyle C."/>
            <person name="Baxter E.G."/>
            <person name="Helt G."/>
            <person name="Nelson C.R."/>
            <person name="Miklos G.L.G."/>
            <person name="Abril J.F."/>
            <person name="Agbayani A."/>
            <person name="An H.-J."/>
            <person name="Andrews-Pfannkoch C."/>
            <person name="Baldwin D."/>
            <person name="Ballew R.M."/>
            <person name="Basu A."/>
            <person name="Baxendale J."/>
            <person name="Bayraktaroglu L."/>
            <person name="Beasley E.M."/>
            <person name="Beeson K.Y."/>
            <person name="Benos P.V."/>
            <person name="Berman B.P."/>
            <person name="Bhandari D."/>
            <person name="Bolshakov S."/>
            <person name="Borkova D."/>
            <person name="Botchan M.R."/>
            <person name="Bouck J."/>
            <person name="Brokstein P."/>
            <person name="Brottier P."/>
            <person name="Burtis K.C."/>
            <person name="Busam D.A."/>
            <person name="Butler H."/>
            <person name="Cadieu E."/>
            <person name="Center A."/>
            <person name="Chandra I."/>
            <person name="Cherry J.M."/>
            <person name="Cawley S."/>
            <person name="Dahlke C."/>
            <person name="Davenport L.B."/>
            <person name="Davies P."/>
            <person name="de Pablos B."/>
            <person name="Delcher A."/>
            <person name="Deng Z."/>
            <person name="Mays A.D."/>
            <person name="Dew I."/>
            <person name="Dietz S.M."/>
            <person name="Dodson K."/>
            <person name="Doup L.E."/>
            <person name="Downes M."/>
            <person name="Dugan-Rocha S."/>
            <person name="Dunkov B.C."/>
            <person name="Dunn P."/>
            <person name="Durbin K.J."/>
            <person name="Evangelista C.C."/>
            <person name="Ferraz C."/>
            <person name="Ferriera S."/>
            <person name="Fleischmann W."/>
            <person name="Fosler C."/>
            <person name="Gabrielian A.E."/>
            <person name="Garg N.S."/>
            <person name="Gelbart W.M."/>
            <person name="Glasser K."/>
            <person name="Glodek A."/>
            <person name="Gong F."/>
            <person name="Gorrell J.H."/>
            <person name="Gu Z."/>
            <person name="Guan P."/>
            <person name="Harris M."/>
            <person name="Harris N.L."/>
            <person name="Harvey D.A."/>
            <person name="Heiman T.J."/>
            <person name="Hernandez J.R."/>
            <person name="Houck J."/>
            <person name="Hostin D."/>
            <person name="Houston K.A."/>
            <person name="Howland T.J."/>
            <person name="Wei M.-H."/>
            <person name="Ibegwam C."/>
            <person name="Jalali M."/>
            <person name="Kalush F."/>
            <person name="Karpen G.H."/>
            <person name="Ke Z."/>
            <person name="Kennison J.A."/>
            <person name="Ketchum K.A."/>
            <person name="Kimmel B.E."/>
            <person name="Kodira C.D."/>
            <person name="Kraft C.L."/>
            <person name="Kravitz S."/>
            <person name="Kulp D."/>
            <person name="Lai Z."/>
            <person name="Lasko P."/>
            <person name="Lei Y."/>
            <person name="Levitsky A.A."/>
            <person name="Li J.H."/>
            <person name="Li Z."/>
            <person name="Liang Y."/>
            <person name="Lin X."/>
            <person name="Liu X."/>
            <person name="Mattei B."/>
            <person name="McIntosh T.C."/>
            <person name="McLeod M.P."/>
            <person name="McPherson D."/>
            <person name="Merkulov G."/>
            <person name="Milshina N.V."/>
            <person name="Mobarry C."/>
            <person name="Morris J."/>
            <person name="Moshrefi A."/>
            <person name="Mount S.M."/>
            <person name="Moy M."/>
            <person name="Murphy B."/>
            <person name="Murphy L."/>
            <person name="Muzny D.M."/>
            <person name="Nelson D.L."/>
            <person name="Nelson D.R."/>
            <person name="Nelson K.A."/>
            <person name="Nixon K."/>
            <person name="Nusskern D.R."/>
            <person name="Pacleb J.M."/>
            <person name="Palazzolo M."/>
            <person name="Pittman G.S."/>
            <person name="Pan S."/>
            <person name="Pollard J."/>
            <person name="Puri V."/>
            <person name="Reese M.G."/>
            <person name="Reinert K."/>
            <person name="Remington K."/>
            <person name="Saunders R.D.C."/>
            <person name="Scheeler F."/>
            <person name="Shen H."/>
            <person name="Shue B.C."/>
            <person name="Siden-Kiamos I."/>
            <person name="Simpson M."/>
            <person name="Skupski M.P."/>
            <person name="Smith T.J."/>
            <person name="Spier E."/>
            <person name="Spradling A.C."/>
            <person name="Stapleton M."/>
            <person name="Strong R."/>
            <person name="Sun E."/>
            <person name="Svirskas R."/>
            <person name="Tector C."/>
            <person name="Turner R."/>
            <person name="Venter E."/>
            <person name="Wang A.H."/>
            <person name="Wang X."/>
            <person name="Wang Z.-Y."/>
            <person name="Wassarman D.A."/>
            <person name="Weinstock G.M."/>
            <person name="Weissenbach J."/>
            <person name="Williams S.M."/>
            <person name="Woodage T."/>
            <person name="Worley K.C."/>
            <person name="Wu D."/>
            <person name="Yang S."/>
            <person name="Yao Q.A."/>
            <person name="Ye J."/>
            <person name="Yeh R.-F."/>
            <person name="Zaveri J.S."/>
            <person name="Zhan M."/>
            <person name="Zhang G."/>
            <person name="Zhao Q."/>
            <person name="Zheng L."/>
            <person name="Zheng X.H."/>
            <person name="Zhong F.N."/>
            <person name="Zhong W."/>
            <person name="Zhou X."/>
            <person name="Zhu S.C."/>
            <person name="Zhu X."/>
            <person name="Smith H.O."/>
            <person name="Gibbs R.A."/>
            <person name="Myers E.W."/>
            <person name="Rubin G.M."/>
            <person name="Venter J.C."/>
        </authorList>
    </citation>
    <scope>NUCLEOTIDE SEQUENCE [LARGE SCALE GENOMIC DNA]</scope>
    <source>
        <strain evidence="11">Berkeley</strain>
    </source>
</reference>
<reference evidence="11" key="2">
    <citation type="journal article" date="2002" name="Genome Biol.">
        <title>Annotation of the Drosophila melanogaster euchromatic genome: a systematic review.</title>
        <authorList>
            <person name="Misra S."/>
            <person name="Crosby M.A."/>
            <person name="Mungall C.J."/>
            <person name="Matthews B.B."/>
            <person name="Campbell K.S."/>
            <person name="Hradecky P."/>
            <person name="Huang Y."/>
            <person name="Kaminker J.S."/>
            <person name="Millburn G.H."/>
            <person name="Prochnik S.E."/>
            <person name="Smith C.D."/>
            <person name="Tupy J.L."/>
            <person name="Whitfield E.J."/>
            <person name="Bayraktaroglu L."/>
            <person name="Berman B.P."/>
            <person name="Bettencourt B.R."/>
            <person name="Celniker S.E."/>
            <person name="de Grey A.D.N.J."/>
            <person name="Drysdale R.A."/>
            <person name="Harris N.L."/>
            <person name="Richter J."/>
            <person name="Russo S."/>
            <person name="Schroeder A.J."/>
            <person name="Shu S.Q."/>
            <person name="Stapleton M."/>
            <person name="Yamada C."/>
            <person name="Ashburner M."/>
            <person name="Gelbart W.M."/>
            <person name="Rubin G.M."/>
            <person name="Lewis S.E."/>
        </authorList>
    </citation>
    <scope>GENOME REANNOTATION</scope>
    <source>
        <strain evidence="11">Berkeley</strain>
    </source>
</reference>
<reference evidence="9" key="3">
    <citation type="journal article" date="2016" name="Neuron">
        <title>The Basis of Food Texture Sensation in Drosophila.</title>
        <authorList>
            <person name="Zhang Y.V."/>
            <person name="Aikin T.J."/>
            <person name="Li Z."/>
            <person name="Montell C."/>
        </authorList>
    </citation>
    <scope>FUNCTION</scope>
    <scope>SUBCELLULAR LOCATION</scope>
    <scope>TISSUE SPECIFICITY</scope>
    <scope>DISRUPTION PHENOTYPE</scope>
</reference>
<reference evidence="9" key="4">
    <citation type="journal article" date="2016" name="Proc. Natl. Acad. Sci. U.S.A.">
        <title>Transmembrane channel-like (tmc) gene regulates Drosophila larval locomotion.</title>
        <authorList>
            <person name="Guo Y."/>
            <person name="Wang Y."/>
            <person name="Zhang W."/>
            <person name="Meltzer S."/>
            <person name="Zanini D."/>
            <person name="Yu Y."/>
            <person name="Li J."/>
            <person name="Cheng T."/>
            <person name="Guo Z."/>
            <person name="Wang Q."/>
            <person name="Jacobs J.S."/>
            <person name="Sharma Y."/>
            <person name="Eberl D.F."/>
            <person name="Goepfert M.C."/>
            <person name="Jan L.Y."/>
            <person name="Jan Y.N."/>
            <person name="Wang Z."/>
        </authorList>
    </citation>
    <scope>FUNCTION</scope>
    <scope>TISSUE SPECIFICITY</scope>
    <scope>DISRUPTION PHENOTYPE</scope>
</reference>
<reference evidence="9" key="5">
    <citation type="journal article" date="2019" name="Curr. Biol.">
        <title>Direction Selectivity in Drosophila Proprioceptors Requires the Mechanosensory Channel Tmc.</title>
        <authorList>
            <person name="He L."/>
            <person name="Gulyanon S."/>
            <person name="Mihovilovic Skanata M."/>
            <person name="Karagyozov D."/>
            <person name="Heckscher E.S."/>
            <person name="Krieg M."/>
            <person name="Tsechpenakis G."/>
            <person name="Gershow M."/>
            <person name="Tracey W.D. Jr."/>
        </authorList>
    </citation>
    <scope>FUNCTION</scope>
    <scope>DISRUPTION PHENOTYPE</scope>
</reference>
<reference evidence="9" key="6">
    <citation type="journal article" date="2019" name="Elife">
        <title>Sweet neurons inhibit texture discrimination by signaling TMC-expressing mechanosensitive neurons in Drosophila.</title>
        <authorList>
            <person name="Wu S.F."/>
            <person name="Ja Y.L."/>
            <person name="Zhang Y.J."/>
            <person name="Yang C.H."/>
        </authorList>
    </citation>
    <scope>FUNCTION</scope>
    <scope>TISSUE SPECIFICITY</scope>
</reference>
<reference evidence="9" key="7">
    <citation type="journal article" date="2020" name="Curr. Biol.">
        <title>Parallel Mechanosensory Pathways Direct Oviposition Decision-Making in Drosophila.</title>
        <authorList>
            <person name="Zhang L."/>
            <person name="Yu J."/>
            <person name="Guo X."/>
            <person name="Wei J."/>
            <person name="Liu T."/>
            <person name="Zhang W."/>
        </authorList>
    </citation>
    <scope>FUNCTION</scope>
    <scope>TISSUE SPECIFICITY</scope>
    <scope>DISRUPTION PHENOTYPE</scope>
</reference>
<accession>A0A0U1QT59</accession>
<accession>M9NDN5</accession>
<dbReference type="EMBL" id="AE014296">
    <property type="protein sequence ID" value="AAF50239.5"/>
    <property type="molecule type" value="Genomic_DNA"/>
</dbReference>
<dbReference type="EMBL" id="AE014296">
    <property type="protein sequence ID" value="AFH04369.1"/>
    <property type="molecule type" value="Genomic_DNA"/>
</dbReference>
<dbReference type="RefSeq" id="NP_001246698.1">
    <molecule id="A0A0U1QT59-2"/>
    <property type="nucleotide sequence ID" value="NM_001259769.3"/>
</dbReference>
<dbReference type="RefSeq" id="NP_001303362.1">
    <molecule id="A0A0U1QT59-1"/>
    <property type="nucleotide sequence ID" value="NM_001316433.1"/>
</dbReference>
<dbReference type="FunCoup" id="A0A0U1QT59">
    <property type="interactions" value="16"/>
</dbReference>
<dbReference type="STRING" id="7227.FBpp0312604"/>
<dbReference type="TCDB" id="1.A.17.4.9">
    <property type="family name" value="the calcium-dependent chloride channel (ca-clc) family"/>
</dbReference>
<dbReference type="GlyGen" id="A0A0U1QT59">
    <property type="glycosylation" value="6 sites"/>
</dbReference>
<dbReference type="PaxDb" id="7227-FBpp0293143"/>
<dbReference type="EnsemblMetazoa" id="FBtr0347573">
    <molecule id="A0A0U1QT59-1"/>
    <property type="protein sequence ID" value="FBpp0312604"/>
    <property type="gene ID" value="FBgn0267796"/>
</dbReference>
<dbReference type="EnsemblMetazoa" id="FBtr0347574">
    <molecule id="A0A0U1QT59-2"/>
    <property type="protein sequence ID" value="FBpp0312605"/>
    <property type="gene ID" value="FBgn0267796"/>
</dbReference>
<dbReference type="GeneID" id="26067066"/>
<dbReference type="KEGG" id="dme:Dmel_CG46121"/>
<dbReference type="AGR" id="FB:FBgn0267796"/>
<dbReference type="CTD" id="26067066"/>
<dbReference type="FlyBase" id="FBgn0267796">
    <property type="gene designation" value="Tmc"/>
</dbReference>
<dbReference type="VEuPathDB" id="VectorBase:FBgn0267796"/>
<dbReference type="eggNOG" id="ENOG502QQGX">
    <property type="taxonomic scope" value="Eukaryota"/>
</dbReference>
<dbReference type="GeneTree" id="ENSGT01050000244942"/>
<dbReference type="HOGENOM" id="CLU_001915_0_0_1"/>
<dbReference type="InParanoid" id="A0A0U1QT59"/>
<dbReference type="OMA" id="VKEPHPK"/>
<dbReference type="OrthoDB" id="5831905at2759"/>
<dbReference type="BioGRID-ORCS" id="26067066">
    <property type="hits" value="0 hits in 3 CRISPR screens"/>
</dbReference>
<dbReference type="GenomeRNAi" id="26067066"/>
<dbReference type="PRO" id="PR:A0A0U1QT59"/>
<dbReference type="Proteomes" id="UP000000803">
    <property type="component" value="Chromosome 3L"/>
</dbReference>
<dbReference type="Bgee" id="FBgn0267796">
    <property type="expression patterns" value="Expressed in multidendritic neuron (Drosophila) in post-embryonic organism and 4 other cell types or tissues"/>
</dbReference>
<dbReference type="ExpressionAtlas" id="A0A0U1QT59">
    <property type="expression patterns" value="baseline and differential"/>
</dbReference>
<dbReference type="GO" id="GO:0030425">
    <property type="term" value="C:dendrite"/>
    <property type="evidence" value="ECO:0000315"/>
    <property type="project" value="FlyBase"/>
</dbReference>
<dbReference type="GO" id="GO:0005886">
    <property type="term" value="C:plasma membrane"/>
    <property type="evidence" value="ECO:0007669"/>
    <property type="project" value="UniProtKB-SubCell"/>
</dbReference>
<dbReference type="GO" id="GO:0008381">
    <property type="term" value="F:mechanosensitive monoatomic ion channel activity"/>
    <property type="evidence" value="ECO:0000318"/>
    <property type="project" value="GO_Central"/>
</dbReference>
<dbReference type="GO" id="GO:0007635">
    <property type="term" value="P:chemosensory behavior"/>
    <property type="evidence" value="ECO:0000315"/>
    <property type="project" value="UniProtKB"/>
</dbReference>
<dbReference type="GO" id="GO:0001582">
    <property type="term" value="P:detection of chemical stimulus involved in sensory perception of sweet taste"/>
    <property type="evidence" value="ECO:0000315"/>
    <property type="project" value="UniProtKB"/>
</dbReference>
<dbReference type="GO" id="GO:0050974">
    <property type="term" value="P:detection of mechanical stimulus involved in sensory perception"/>
    <property type="evidence" value="ECO:0000315"/>
    <property type="project" value="UniProtKB"/>
</dbReference>
<dbReference type="GO" id="GO:0008345">
    <property type="term" value="P:larval locomotory behavior"/>
    <property type="evidence" value="ECO:0000315"/>
    <property type="project" value="FlyBase"/>
</dbReference>
<dbReference type="GO" id="GO:0019232">
    <property type="term" value="P:perception of rate of movement"/>
    <property type="evidence" value="ECO:0000315"/>
    <property type="project" value="UniProtKB"/>
</dbReference>
<dbReference type="GO" id="GO:1905792">
    <property type="term" value="P:positive regulation of mechanosensory behavior"/>
    <property type="evidence" value="ECO:0000315"/>
    <property type="project" value="UniProtKB"/>
</dbReference>
<dbReference type="GO" id="GO:0019230">
    <property type="term" value="P:proprioception"/>
    <property type="evidence" value="ECO:0000315"/>
    <property type="project" value="FlyBase"/>
</dbReference>
<dbReference type="GO" id="GO:0046662">
    <property type="term" value="P:regulation of egg-laying behavior"/>
    <property type="evidence" value="ECO:0000315"/>
    <property type="project" value="UniProtKB"/>
</dbReference>
<dbReference type="GO" id="GO:1905790">
    <property type="term" value="P:regulation of mechanosensory behavior"/>
    <property type="evidence" value="ECO:0000315"/>
    <property type="project" value="UniProtKB"/>
</dbReference>
<dbReference type="InterPro" id="IPR038900">
    <property type="entry name" value="TMC"/>
</dbReference>
<dbReference type="InterPro" id="IPR012496">
    <property type="entry name" value="TMC_dom"/>
</dbReference>
<dbReference type="PANTHER" id="PTHR23302:SF40">
    <property type="entry name" value="TRANSMEMBRANE CHANNEL-LIKE PROTEIN"/>
    <property type="match status" value="1"/>
</dbReference>
<dbReference type="PANTHER" id="PTHR23302">
    <property type="entry name" value="TRANSMEMBRANE CHANNEL-RELATED"/>
    <property type="match status" value="1"/>
</dbReference>
<dbReference type="Pfam" id="PF07810">
    <property type="entry name" value="TMC"/>
    <property type="match status" value="1"/>
</dbReference>
<comment type="function">
    <text evidence="3 4 5 6 7">Probable ion channel (PubMed:27478019, PubMed:30853433, PubMed:31184585, PubMed:32649914). Component of mechanosensitive neurons that participates in proprioception, sensing food texture, and directing egg-laying site selection (oviposition) (PubMed:27298354, PubMed:27478019, PubMed:30853433, PubMed:31184585, PubMed:32649914). Component of multi-dendritic neurons of the labellum (md-L) where it is required for sensing the hardness and viscosity of their food, enabling them to behaviorally discriminate their preferred softness and smoothness from harder and stickier food options (PubMed:27478019). Required as part of oviposition site selection process to relay mechanosensory and chemosensory information on the hardness and sweetness of potential egg-laying substrates, thus ensuring females select the most optimal site for their eggs survival (PubMed:31184585, PubMed:32649914). Females determine the softest substrate for their eggs first by making a coarse evaluation of substrate hardness using mechanosensitive channels nan and Piezo in the leg tarsal bristles, followed by a much finer assessment using nan, iav and Tmc mechanosensitive channels on the labellum (PubMed:31184585, PubMed:32649914). This protein is required to sense subtle differences in substrate stiffness (between 0.25% and 0.3% agarose), likely acting in the md-L neurons (PubMed:32649914). Also required in neurons on the labellum, including the md-Ls, and possibly in the brain, to inhibit discrimination of egg-laying substrates of different hardness if the substrate contains sucrose (PubMed:32649914). During oviposition evaluation, activation of sweet neurons by sucrose enhances the activity of the Tmc neurons resulting in females losing their softness preference in favor of egg-laying sites that contain sucrose (PubMed:32649914). Acts in the larvae peripheral sensory neurons, to contribute to proprioception and sensory feedback for normal forward crawling behavior (PubMed:27298354, PubMed:30853433). Required for the normal activity of the proprioceptive sensory dendrites, ddaE which show preferential responses to forward locomotion, and ddaD which show preferential responses to backward locomotion (PubMed:30853433).</text>
</comment>
<comment type="subcellular location">
    <subcellularLocation>
        <location evidence="1">Cell membrane</location>
        <topology evidence="1">Multi-pass membrane protein</topology>
    </subcellularLocation>
    <subcellularLocation>
        <location evidence="4">Cell projection</location>
        <location evidence="4">Dendrite</location>
    </subcellularLocation>
</comment>
<comment type="alternative products">
    <event type="alternative splicing"/>
    <isoform>
        <id>A0A0U1QT59-1</id>
        <name evidence="10">C</name>
        <sequence type="displayed"/>
    </isoform>
    <isoform>
        <id>A0A0U1QT59-2</id>
        <name evidence="10">D</name>
        <sequence type="described" ref="VSP_061215"/>
    </isoform>
</comment>
<comment type="tissue specificity">
    <text evidence="3 4 6 7">Expressed in multi-dendritic neurons of the labellum (md-L), which extend elaborate dendritic arbors innervating the bases of taste hairs (at protein level) (PubMed:27478019). In larvae, expressed in class I and class II dendritic arborization (da) neurons and bipolar dendrite (bd) neurons (at protein level) (PubMed:27298354). In adults, expressed in various sensory neurons including those in the mouth parts, olfactory neurons in the antenna, wing bristle neurons, haltere neurons, arista neurons, and many other sensory neurons, including a subset of chordotonal (Cho) neurons (PubMed:27298354, PubMed:27478019). Expressed in md-L axon terminals, including those that project into the subesophageal zone (SEZ) (PubMed:27478019, PubMed:31184585). Also expressed in a small number of local neurons in the adult ventral nerve cord (VNC), and projections extending from a few neurons in the legs or wing hinges (PubMed:27478019). In the adult mouth, expressed in a few multi-dendritic neurons of the ventral cibarial sensory organ (VCSO); the multiple elaborate dendritic branches form a brush-like structure that faces the luminal side of the food-passing tunnel (PubMed:27478019). Also expressed in the oviduct and uterus of adult females (PubMed:32649914).</text>
</comment>
<comment type="disruption phenotype">
    <text evidence="3 4 5 7">Viable and appear morphologically normal (PubMed:27478019). Adults display a significant reduction in the electrophysiological responses of multi-dendritic neurons of the labellum (md-L) to mechanical stimuli (PubMed:27478019). Adults are unable to discriminate between the preferred softness (1% agarose) or smoothness (sucrose solution only) from harder or stickier food options (PubMed:27478019). Adult females display a reduced ability to discriminate between small differences in egg-laying substrate stiffness (PubMed:32649914). Larvae display abnormal locomotion behaviors that likely result from the loss of proprioceptive feedback (PubMed:27298354, PubMed:30853433). Displays reduced sensitivity to movement direction due to decreased activity of the dorsal proprioceptors neurons ddaD, which are activated during backward movement, and ddaE neurons which are activated during forward movement (PubMed:30853433). As a consequence, larvae crawling speed is reduced due to increased head curl behavior and increased backward locomotion (PubMed:27298354). No obvious defects in larvae dendrite morphology of class I da neurons or axon targeting of neurons in the ventral nerve cord (PubMed:27298354). Adults display a normal avoidance of bitter tastes such as quinine, denatonium, strychnine and berberine, and L4 and S6 sensilla display normal electrophysiological responses to salt, sucrose and caffeine (PubMed:27478019).</text>
</comment>
<comment type="similarity">
    <text evidence="9">Belongs to the TMC family.</text>
</comment>
<evidence type="ECO:0000255" key="1"/>
<evidence type="ECO:0000256" key="2">
    <source>
        <dbReference type="SAM" id="MobiDB-lite"/>
    </source>
</evidence>
<evidence type="ECO:0000269" key="3">
    <source>
    </source>
</evidence>
<evidence type="ECO:0000269" key="4">
    <source>
    </source>
</evidence>
<evidence type="ECO:0000269" key="5">
    <source>
    </source>
</evidence>
<evidence type="ECO:0000269" key="6">
    <source>
    </source>
</evidence>
<evidence type="ECO:0000269" key="7">
    <source>
    </source>
</evidence>
<evidence type="ECO:0000303" key="8">
    <source>
    </source>
</evidence>
<evidence type="ECO:0000305" key="9"/>
<evidence type="ECO:0000312" key="10">
    <source>
        <dbReference type="FlyBase" id="FBgn0267796"/>
    </source>
</evidence>
<evidence type="ECO:0000312" key="11">
    <source>
        <dbReference type="Proteomes" id="UP000000803"/>
    </source>
</evidence>
<organism evidence="11">
    <name type="scientific">Drosophila melanogaster</name>
    <name type="common">Fruit fly</name>
    <dbReference type="NCBI Taxonomy" id="7227"/>
    <lineage>
        <taxon>Eukaryota</taxon>
        <taxon>Metazoa</taxon>
        <taxon>Ecdysozoa</taxon>
        <taxon>Arthropoda</taxon>
        <taxon>Hexapoda</taxon>
        <taxon>Insecta</taxon>
        <taxon>Pterygota</taxon>
        <taxon>Neoptera</taxon>
        <taxon>Endopterygota</taxon>
        <taxon>Diptera</taxon>
        <taxon>Brachycera</taxon>
        <taxon>Muscomorpha</taxon>
        <taxon>Ephydroidea</taxon>
        <taxon>Drosophilidae</taxon>
        <taxon>Drosophila</taxon>
        <taxon>Sophophora</taxon>
    </lineage>
</organism>